<sequence>MTDCSRNETGALAERVGQVARKTRETDIAVTWRLDGAGRADVDTGVPFFDHMLDQIARHSLTDLTARAVGDLEIDAHHTVEDTGIALGQALRRALGDGRSIRRYGSAFVPFDETLAFAAVDVSGRPYLVFDAALPAQKVGNFDTELAEEFFRALAMNAGITLHLKVHYGRNTHHMIEGLFKAFARALGDAVARDPRVLGVPSTKGALF</sequence>
<organism>
    <name type="scientific">Symbiobacterium thermophilum (strain DSM 24528 / JCM 14929 / IAM 14863 / T)</name>
    <dbReference type="NCBI Taxonomy" id="292459"/>
    <lineage>
        <taxon>Bacteria</taxon>
        <taxon>Bacillati</taxon>
        <taxon>Bacillota</taxon>
        <taxon>Clostridia</taxon>
        <taxon>Eubacteriales</taxon>
        <taxon>Symbiobacteriaceae</taxon>
        <taxon>Symbiobacterium</taxon>
    </lineage>
</organism>
<evidence type="ECO:0000255" key="1">
    <source>
        <dbReference type="HAMAP-Rule" id="MF_00076"/>
    </source>
</evidence>
<feature type="chain" id="PRO_0000158176" description="Imidazoleglycerol-phosphate dehydratase">
    <location>
        <begin position="1"/>
        <end position="208"/>
    </location>
</feature>
<protein>
    <recommendedName>
        <fullName evidence="1">Imidazoleglycerol-phosphate dehydratase</fullName>
        <shortName evidence="1">IGPD</shortName>
        <ecNumber evidence="1">4.2.1.19</ecNumber>
    </recommendedName>
</protein>
<dbReference type="EC" id="4.2.1.19" evidence="1"/>
<dbReference type="EMBL" id="AP006840">
    <property type="protein sequence ID" value="BAD41821.1"/>
    <property type="molecule type" value="Genomic_DNA"/>
</dbReference>
<dbReference type="RefSeq" id="WP_011196955.1">
    <property type="nucleotide sequence ID" value="NC_006177.1"/>
</dbReference>
<dbReference type="SMR" id="Q67KH7"/>
<dbReference type="STRING" id="292459.STH2836"/>
<dbReference type="KEGG" id="sth:STH2836"/>
<dbReference type="eggNOG" id="COG0131">
    <property type="taxonomic scope" value="Bacteria"/>
</dbReference>
<dbReference type="HOGENOM" id="CLU_044308_3_0_9"/>
<dbReference type="OrthoDB" id="9790411at2"/>
<dbReference type="UniPathway" id="UPA00031">
    <property type="reaction ID" value="UER00011"/>
</dbReference>
<dbReference type="Proteomes" id="UP000000417">
    <property type="component" value="Chromosome"/>
</dbReference>
<dbReference type="GO" id="GO:0005737">
    <property type="term" value="C:cytoplasm"/>
    <property type="evidence" value="ECO:0007669"/>
    <property type="project" value="UniProtKB-SubCell"/>
</dbReference>
<dbReference type="GO" id="GO:0004424">
    <property type="term" value="F:imidazoleglycerol-phosphate dehydratase activity"/>
    <property type="evidence" value="ECO:0007669"/>
    <property type="project" value="UniProtKB-UniRule"/>
</dbReference>
<dbReference type="GO" id="GO:0000105">
    <property type="term" value="P:L-histidine biosynthetic process"/>
    <property type="evidence" value="ECO:0007669"/>
    <property type="project" value="UniProtKB-UniRule"/>
</dbReference>
<dbReference type="CDD" id="cd07914">
    <property type="entry name" value="IGPD"/>
    <property type="match status" value="1"/>
</dbReference>
<dbReference type="FunFam" id="3.30.230.40:FF:000001">
    <property type="entry name" value="Imidazoleglycerol-phosphate dehydratase HisB"/>
    <property type="match status" value="1"/>
</dbReference>
<dbReference type="FunFam" id="3.30.230.40:FF:000003">
    <property type="entry name" value="Imidazoleglycerol-phosphate dehydratase HisB"/>
    <property type="match status" value="1"/>
</dbReference>
<dbReference type="Gene3D" id="3.30.230.40">
    <property type="entry name" value="Imidazole glycerol phosphate dehydratase, domain 1"/>
    <property type="match status" value="2"/>
</dbReference>
<dbReference type="HAMAP" id="MF_00076">
    <property type="entry name" value="HisB"/>
    <property type="match status" value="1"/>
</dbReference>
<dbReference type="InterPro" id="IPR038494">
    <property type="entry name" value="IGPD_sf"/>
</dbReference>
<dbReference type="InterPro" id="IPR000807">
    <property type="entry name" value="ImidazoleglycerolP_deHydtase"/>
</dbReference>
<dbReference type="InterPro" id="IPR020565">
    <property type="entry name" value="ImidazoleglycerP_deHydtase_CS"/>
</dbReference>
<dbReference type="InterPro" id="IPR020568">
    <property type="entry name" value="Ribosomal_Su5_D2-typ_SF"/>
</dbReference>
<dbReference type="NCBIfam" id="NF002109">
    <property type="entry name" value="PRK00951.1-5"/>
    <property type="match status" value="1"/>
</dbReference>
<dbReference type="NCBIfam" id="NF002110">
    <property type="entry name" value="PRK00951.1-6"/>
    <property type="match status" value="1"/>
</dbReference>
<dbReference type="NCBIfam" id="NF002111">
    <property type="entry name" value="PRK00951.2-1"/>
    <property type="match status" value="1"/>
</dbReference>
<dbReference type="NCBIfam" id="NF002114">
    <property type="entry name" value="PRK00951.2-4"/>
    <property type="match status" value="1"/>
</dbReference>
<dbReference type="PANTHER" id="PTHR23133:SF2">
    <property type="entry name" value="IMIDAZOLEGLYCEROL-PHOSPHATE DEHYDRATASE"/>
    <property type="match status" value="1"/>
</dbReference>
<dbReference type="PANTHER" id="PTHR23133">
    <property type="entry name" value="IMIDAZOLEGLYCEROL-PHOSPHATE DEHYDRATASE HIS7"/>
    <property type="match status" value="1"/>
</dbReference>
<dbReference type="Pfam" id="PF00475">
    <property type="entry name" value="IGPD"/>
    <property type="match status" value="1"/>
</dbReference>
<dbReference type="SUPFAM" id="SSF54211">
    <property type="entry name" value="Ribosomal protein S5 domain 2-like"/>
    <property type="match status" value="2"/>
</dbReference>
<dbReference type="PROSITE" id="PS00954">
    <property type="entry name" value="IGP_DEHYDRATASE_1"/>
    <property type="match status" value="1"/>
</dbReference>
<dbReference type="PROSITE" id="PS00955">
    <property type="entry name" value="IGP_DEHYDRATASE_2"/>
    <property type="match status" value="1"/>
</dbReference>
<reference key="1">
    <citation type="journal article" date="2004" name="Nucleic Acids Res.">
        <title>Genome sequence of Symbiobacterium thermophilum, an uncultivable bacterium that depends on microbial commensalism.</title>
        <authorList>
            <person name="Ueda K."/>
            <person name="Yamashita A."/>
            <person name="Ishikawa J."/>
            <person name="Shimada M."/>
            <person name="Watsuji T."/>
            <person name="Morimura K."/>
            <person name="Ikeda H."/>
            <person name="Hattori M."/>
            <person name="Beppu T."/>
        </authorList>
    </citation>
    <scope>NUCLEOTIDE SEQUENCE [LARGE SCALE GENOMIC DNA]</scope>
    <source>
        <strain>DSM 24528 / JCM 14929 / IAM 14863 / T</strain>
    </source>
</reference>
<comment type="catalytic activity">
    <reaction evidence="1">
        <text>D-erythro-1-(imidazol-4-yl)glycerol 3-phosphate = 3-(imidazol-4-yl)-2-oxopropyl phosphate + H2O</text>
        <dbReference type="Rhea" id="RHEA:11040"/>
        <dbReference type="ChEBI" id="CHEBI:15377"/>
        <dbReference type="ChEBI" id="CHEBI:57766"/>
        <dbReference type="ChEBI" id="CHEBI:58278"/>
        <dbReference type="EC" id="4.2.1.19"/>
    </reaction>
</comment>
<comment type="pathway">
    <text evidence="1">Amino-acid biosynthesis; L-histidine biosynthesis; L-histidine from 5-phospho-alpha-D-ribose 1-diphosphate: step 6/9.</text>
</comment>
<comment type="subcellular location">
    <subcellularLocation>
        <location evidence="1">Cytoplasm</location>
    </subcellularLocation>
</comment>
<comment type="similarity">
    <text evidence="1">Belongs to the imidazoleglycerol-phosphate dehydratase family.</text>
</comment>
<accession>Q67KH7</accession>
<keyword id="KW-0028">Amino-acid biosynthesis</keyword>
<keyword id="KW-0963">Cytoplasm</keyword>
<keyword id="KW-0368">Histidine biosynthesis</keyword>
<keyword id="KW-0456">Lyase</keyword>
<keyword id="KW-1185">Reference proteome</keyword>
<proteinExistence type="inferred from homology"/>
<gene>
    <name evidence="1" type="primary">hisB</name>
    <name type="ordered locus">STH2836</name>
</gene>
<name>HIS7_SYMTH</name>